<keyword id="KW-0004">4Fe-4S</keyword>
<keyword id="KW-0249">Electron transport</keyword>
<keyword id="KW-0408">Iron</keyword>
<keyword id="KW-0411">Iron-sulfur</keyword>
<keyword id="KW-0479">Metal-binding</keyword>
<keyword id="KW-0535">Nitrogen fixation</keyword>
<keyword id="KW-0677">Repeat</keyword>
<keyword id="KW-0813">Transport</keyword>
<feature type="chain" id="PRO_0000159166" description="Ferredoxin-like protein in vnf region">
    <location>
        <begin position="1"/>
        <end position="65"/>
    </location>
</feature>
<feature type="domain" description="4Fe-4S ferredoxin-type 1" evidence="2">
    <location>
        <begin position="2"/>
        <end position="30"/>
    </location>
</feature>
<feature type="domain" description="4Fe-4S ferredoxin-type 2" evidence="2">
    <location>
        <begin position="32"/>
        <end position="65"/>
    </location>
</feature>
<feature type="binding site" evidence="1">
    <location>
        <position position="10"/>
    </location>
    <ligand>
        <name>[4Fe-4S] cluster</name>
        <dbReference type="ChEBI" id="CHEBI:49883"/>
        <label>1</label>
    </ligand>
</feature>
<feature type="binding site" evidence="1">
    <location>
        <position position="13"/>
    </location>
    <ligand>
        <name>[4Fe-4S] cluster</name>
        <dbReference type="ChEBI" id="CHEBI:49883"/>
        <label>1</label>
    </ligand>
</feature>
<feature type="binding site" evidence="1">
    <location>
        <position position="16"/>
    </location>
    <ligand>
        <name>[4Fe-4S] cluster</name>
        <dbReference type="ChEBI" id="CHEBI:49883"/>
        <label>1</label>
    </ligand>
</feature>
<feature type="binding site" evidence="1">
    <location>
        <position position="20"/>
    </location>
    <ligand>
        <name>[4Fe-4S] cluster</name>
        <dbReference type="ChEBI" id="CHEBI:49883"/>
        <label>2</label>
    </ligand>
</feature>
<feature type="binding site" evidence="1">
    <location>
        <position position="39"/>
    </location>
    <ligand>
        <name>[4Fe-4S] cluster</name>
        <dbReference type="ChEBI" id="CHEBI:49883"/>
        <label>2</label>
    </ligand>
</feature>
<feature type="binding site" evidence="1">
    <location>
        <position position="42"/>
    </location>
    <ligand>
        <name>[4Fe-4S] cluster</name>
        <dbReference type="ChEBI" id="CHEBI:49883"/>
        <label>2</label>
    </ligand>
</feature>
<feature type="binding site" evidence="1">
    <location>
        <position position="50"/>
    </location>
    <ligand>
        <name>[4Fe-4S] cluster</name>
        <dbReference type="ChEBI" id="CHEBI:49883"/>
        <label>2</label>
    </ligand>
</feature>
<feature type="binding site" evidence="1">
    <location>
        <position position="54"/>
    </location>
    <ligand>
        <name>[4Fe-4S] cluster</name>
        <dbReference type="ChEBI" id="CHEBI:49883"/>
        <label>1</label>
    </ligand>
</feature>
<feature type="sequence conflict" description="In Ref. 2; AAA22171." evidence="3" ref="2">
    <original>L</original>
    <variation>F</variation>
    <location>
        <position position="58"/>
    </location>
</feature>
<organism>
    <name type="scientific">Azotobacter vinelandii</name>
    <dbReference type="NCBI Taxonomy" id="354"/>
    <lineage>
        <taxon>Bacteria</taxon>
        <taxon>Pseudomonadati</taxon>
        <taxon>Pseudomonadota</taxon>
        <taxon>Gammaproteobacteria</taxon>
        <taxon>Pseudomonadales</taxon>
        <taxon>Pseudomonadaceae</taxon>
        <taxon>Azotobacter</taxon>
    </lineage>
</organism>
<sequence>MAMAIDGYECTVCGDCEPVCPTGSIVFRDDHYAIEADSCNECTDVGEPRCLGVCPVDLCIQPLDD</sequence>
<protein>
    <recommendedName>
        <fullName>Ferredoxin-like protein in vnf region</fullName>
    </recommendedName>
</protein>
<dbReference type="EMBL" id="X13519">
    <property type="protein sequence ID" value="CAA31868.1"/>
    <property type="molecule type" value="Genomic_DNA"/>
</dbReference>
<dbReference type="EMBL" id="M32371">
    <property type="protein sequence ID" value="AAA22171.1"/>
    <property type="molecule type" value="Genomic_DNA"/>
</dbReference>
<dbReference type="PIR" id="B35405">
    <property type="entry name" value="B35405"/>
</dbReference>
<dbReference type="RefSeq" id="WP_012698954.1">
    <property type="nucleotide sequence ID" value="NZ_FPKM01000002.1"/>
</dbReference>
<dbReference type="SMR" id="P14939"/>
<dbReference type="GeneID" id="88183722"/>
<dbReference type="GO" id="GO:0051539">
    <property type="term" value="F:4 iron, 4 sulfur cluster binding"/>
    <property type="evidence" value="ECO:0007669"/>
    <property type="project" value="UniProtKB-KW"/>
</dbReference>
<dbReference type="GO" id="GO:0046872">
    <property type="term" value="F:metal ion binding"/>
    <property type="evidence" value="ECO:0007669"/>
    <property type="project" value="UniProtKB-KW"/>
</dbReference>
<dbReference type="GO" id="GO:0009399">
    <property type="term" value="P:nitrogen fixation"/>
    <property type="evidence" value="ECO:0007669"/>
    <property type="project" value="UniProtKB-KW"/>
</dbReference>
<dbReference type="Gene3D" id="3.30.70.20">
    <property type="match status" value="1"/>
</dbReference>
<dbReference type="InterPro" id="IPR017896">
    <property type="entry name" value="4Fe4S_Fe-S-bd"/>
</dbReference>
<dbReference type="InterPro" id="IPR017900">
    <property type="entry name" value="4Fe4S_Fe_S_CS"/>
</dbReference>
<dbReference type="Pfam" id="PF12838">
    <property type="entry name" value="Fer4_7"/>
    <property type="match status" value="1"/>
</dbReference>
<dbReference type="SUPFAM" id="SSF54862">
    <property type="entry name" value="4Fe-4S ferredoxins"/>
    <property type="match status" value="1"/>
</dbReference>
<dbReference type="PROSITE" id="PS00198">
    <property type="entry name" value="4FE4S_FER_1"/>
    <property type="match status" value="1"/>
</dbReference>
<dbReference type="PROSITE" id="PS51379">
    <property type="entry name" value="4FE4S_FER_2"/>
    <property type="match status" value="2"/>
</dbReference>
<proteinExistence type="predicted"/>
<reference key="1">
    <citation type="journal article" date="1988" name="Mol. Gen. Genet.">
        <title>Characterization of the gene for the Fe-protein of the vanadium dependent alternative nitrogenase of Azotobacter vinelandii and construction of a Tn5 mutant.</title>
        <authorList>
            <person name="Raina R."/>
            <person name="Reddy A."/>
            <person name="Ghosal D."/>
            <person name="Das H.K."/>
        </authorList>
    </citation>
    <scope>NUCLEOTIDE SEQUENCE [GENOMIC DNA]</scope>
</reference>
<reference key="2">
    <citation type="journal article" date="1990" name="J. Bacteriol.">
        <title>Nucleotide sequences and mutational analysis of the structural genes for nitrogenase 2 of Azotobacter vinelandii.</title>
        <authorList>
            <person name="Joerger R.D."/>
            <person name="Loveless T.M."/>
            <person name="Pau R.N."/>
            <person name="Mitchenall L.A."/>
            <person name="Simon B.H."/>
            <person name="Bishop P.E."/>
        </authorList>
    </citation>
    <scope>NUCLEOTIDE SEQUENCE [GENOMIC DNA]</scope>
    <source>
        <strain>CA</strain>
    </source>
</reference>
<evidence type="ECO:0000250" key="1"/>
<evidence type="ECO:0000255" key="2">
    <source>
        <dbReference type="PROSITE-ProRule" id="PRU00711"/>
    </source>
</evidence>
<evidence type="ECO:0000305" key="3"/>
<name>FERV_AZOVI</name>
<accession>P14939</accession>
<comment type="cofactor">
    <cofactor evidence="3">
        <name>[4Fe-4S] cluster</name>
        <dbReference type="ChEBI" id="CHEBI:49883"/>
    </cofactor>
    <text evidence="3">Binds 2 [4Fe-4S] clusters.</text>
</comment>